<sequence length="166" mass="19037">MANAQATEEEIEIVEEGTTAPQVTEPPLPATIAGLAALLEIPLDDCLVPCNFCGKFLSHLEACEFDDKRLSLIWKGHLVYACCRWCCTATATFEFNEFYEHTVTGREIEFVTGKSVFDIDVRCQNCMRYLDSIEKLDICGRRLPFHKVRDSWKGICRLCKHFYNDW</sequence>
<comment type="function">
    <text evidence="1">Plays a major role in the induction and maintenance of cellular transformation. E6 associates with host UBE3A/E6-AP ubiquitin-protein ligase and modulates its activity. Protects host keratinocytes from apoptosis by mediating the degradation of host BAK1. May also inhibit host immune response.</text>
</comment>
<comment type="subunit">
    <text evidence="1">Forms homodimers. Interacts with ubiquitin-protein ligase UBE3A/E6-AP; this interaction stimulates UBE3A ubiquitin activity. Interacts with host BAK1.</text>
</comment>
<comment type="subcellular location">
    <subcellularLocation>
        <location evidence="1">Host cytoplasm</location>
    </subcellularLocation>
    <subcellularLocation>
        <location evidence="1">Host nucleus</location>
    </subcellularLocation>
</comment>
<comment type="similarity">
    <text evidence="1 2">Belongs to the papillomaviridae E6 protein family.</text>
</comment>
<feature type="chain" id="PRO_0000133339" description="Protein E6">
    <location>
        <begin position="1"/>
        <end position="166"/>
    </location>
</feature>
<feature type="zinc finger region" evidence="1">
    <location>
        <begin position="50"/>
        <end position="86"/>
    </location>
</feature>
<feature type="zinc finger region" evidence="1">
    <location>
        <begin position="123"/>
        <end position="159"/>
    </location>
</feature>
<protein>
    <recommendedName>
        <fullName evidence="1">Protein E6</fullName>
    </recommendedName>
</protein>
<evidence type="ECO:0000255" key="1">
    <source>
        <dbReference type="HAMAP-Rule" id="MF_04006"/>
    </source>
</evidence>
<evidence type="ECO:0000305" key="2"/>
<name>VE6_HPV19</name>
<proteinExistence type="inferred from homology"/>
<organismHost>
    <name type="scientific">Homo sapiens</name>
    <name type="common">Human</name>
    <dbReference type="NCBI Taxonomy" id="9606"/>
</organismHost>
<reference key="1">
    <citation type="journal article" date="1994" name="Curr. Top. Microbiol. Immunol.">
        <title>Primer-directed sequencing of human papillomavirus types.</title>
        <authorList>
            <person name="Delius H."/>
            <person name="Hofmann B."/>
        </authorList>
    </citation>
    <scope>NUCLEOTIDE SEQUENCE [GENOMIC DNA]</scope>
</reference>
<dbReference type="EMBL" id="X74470">
    <property type="protein sequence ID" value="CAA52518.1"/>
    <property type="status" value="ALT_TERM"/>
    <property type="molecule type" value="Genomic_DNA"/>
</dbReference>
<dbReference type="PIR" id="S36485">
    <property type="entry name" value="S36485"/>
</dbReference>
<dbReference type="SMR" id="P36806"/>
<dbReference type="Proteomes" id="UP000009110">
    <property type="component" value="Genome"/>
</dbReference>
<dbReference type="GO" id="GO:0030430">
    <property type="term" value="C:host cell cytoplasm"/>
    <property type="evidence" value="ECO:0007669"/>
    <property type="project" value="UniProtKB-SubCell"/>
</dbReference>
<dbReference type="GO" id="GO:0042025">
    <property type="term" value="C:host cell nucleus"/>
    <property type="evidence" value="ECO:0007669"/>
    <property type="project" value="UniProtKB-SubCell"/>
</dbReference>
<dbReference type="GO" id="GO:0003677">
    <property type="term" value="F:DNA binding"/>
    <property type="evidence" value="ECO:0007669"/>
    <property type="project" value="UniProtKB-UniRule"/>
</dbReference>
<dbReference type="GO" id="GO:0008270">
    <property type="term" value="F:zinc ion binding"/>
    <property type="evidence" value="ECO:0007669"/>
    <property type="project" value="UniProtKB-KW"/>
</dbReference>
<dbReference type="GO" id="GO:0006351">
    <property type="term" value="P:DNA-templated transcription"/>
    <property type="evidence" value="ECO:0007669"/>
    <property type="project" value="UniProtKB-UniRule"/>
</dbReference>
<dbReference type="GO" id="GO:0006355">
    <property type="term" value="P:regulation of DNA-templated transcription"/>
    <property type="evidence" value="ECO:0007669"/>
    <property type="project" value="UniProtKB-UniRule"/>
</dbReference>
<dbReference type="GO" id="GO:0052150">
    <property type="term" value="P:symbiont-mediated perturbation of host apoptosis"/>
    <property type="evidence" value="ECO:0007669"/>
    <property type="project" value="UniProtKB-KW"/>
</dbReference>
<dbReference type="GO" id="GO:0039648">
    <property type="term" value="P:symbiont-mediated perturbation of host ubiquitin-like protein modification"/>
    <property type="evidence" value="ECO:0007669"/>
    <property type="project" value="UniProtKB-UniRule"/>
</dbReference>
<dbReference type="GO" id="GO:0052170">
    <property type="term" value="P:symbiont-mediated suppression of host innate immune response"/>
    <property type="evidence" value="ECO:0007669"/>
    <property type="project" value="UniProtKB-KW"/>
</dbReference>
<dbReference type="GO" id="GO:0039502">
    <property type="term" value="P:symbiont-mediated suppression of host type I interferon-mediated signaling pathway"/>
    <property type="evidence" value="ECO:0007669"/>
    <property type="project" value="UniProtKB-UniRule"/>
</dbReference>
<dbReference type="Gene3D" id="3.30.240.40">
    <property type="entry name" value="E6 early regulatory protein"/>
    <property type="match status" value="2"/>
</dbReference>
<dbReference type="HAMAP" id="MF_04006">
    <property type="entry name" value="HPV_E6"/>
    <property type="match status" value="1"/>
</dbReference>
<dbReference type="InterPro" id="IPR001334">
    <property type="entry name" value="E6"/>
</dbReference>
<dbReference type="InterPro" id="IPR038575">
    <property type="entry name" value="E6_sf"/>
</dbReference>
<dbReference type="Pfam" id="PF00518">
    <property type="entry name" value="E6"/>
    <property type="match status" value="1"/>
</dbReference>
<dbReference type="SUPFAM" id="SSF161229">
    <property type="entry name" value="E6 C-terminal domain-like"/>
    <property type="match status" value="2"/>
</dbReference>
<gene>
    <name evidence="1" type="primary">E6</name>
</gene>
<organism>
    <name type="scientific">Human papillomavirus 19</name>
    <dbReference type="NCBI Taxonomy" id="10608"/>
    <lineage>
        <taxon>Viruses</taxon>
        <taxon>Monodnaviria</taxon>
        <taxon>Shotokuvirae</taxon>
        <taxon>Cossaviricota</taxon>
        <taxon>Papovaviricetes</taxon>
        <taxon>Zurhausenvirales</taxon>
        <taxon>Papillomaviridae</taxon>
        <taxon>Firstpapillomavirinae</taxon>
        <taxon>Betapapillomavirus</taxon>
        <taxon>Betapapillomavirus 1</taxon>
    </lineage>
</organism>
<accession>P36806</accession>
<keyword id="KW-0010">Activator</keyword>
<keyword id="KW-0238">DNA-binding</keyword>
<keyword id="KW-0244">Early protein</keyword>
<keyword id="KW-1035">Host cytoplasm</keyword>
<keyword id="KW-1048">Host nucleus</keyword>
<keyword id="KW-0945">Host-virus interaction</keyword>
<keyword id="KW-1090">Inhibition of host innate immune response by virus</keyword>
<keyword id="KW-0479">Metal-binding</keyword>
<keyword id="KW-1119">Modulation of host cell apoptosis by virus</keyword>
<keyword id="KW-0804">Transcription</keyword>
<keyword id="KW-0805">Transcription regulation</keyword>
<keyword id="KW-0899">Viral immunoevasion</keyword>
<keyword id="KW-0862">Zinc</keyword>
<keyword id="KW-0863">Zinc-finger</keyword>